<name>GSTZ_WHEAT</name>
<reference key="1">
    <citation type="journal article" date="1999" name="Biochim. Biophys. Acta">
        <title>Isolation of a zeta class wheat glutathione S-transferase gene.</title>
        <authorList>
            <person name="Subramaniam K."/>
            <person name="Ye Z."/>
            <person name="Buechley G."/>
            <person name="Shaner G."/>
            <person name="Solomos T."/>
            <person name="Ueng P.P."/>
        </authorList>
    </citation>
    <scope>NUCLEOTIDE SEQUENCE [GENOMIC DNA / MRNA]</scope>
    <scope>CHARACTERIZATION</scope>
    <source>
        <strain>cv. Arthur71</strain>
        <strain>cv. Oasis</strain>
    </source>
</reference>
<sequence length="213" mass="23752">MATAKPILYGAWISSCSHRVRIALNLKGVDYEYKAVNPRTDPDYEKINPIKYIPALVDGDFVLSDSLAIMLYLEDKYPQHPLVPKDIKTKGLDLQIANIVCSSIQPLQGYGVIGLHEGRLSPDESLEVVQRYIDKGFRAIEKLLDGCDSKYCVGDEVHLGDVCLAPQIHAAINRFQIDMTKYPILSRLHDAYMKIPAFQAALPQNQPDAPSAK</sequence>
<gene>
    <name type="primary">GSTZ1</name>
</gene>
<dbReference type="EC" id="2.5.1.18"/>
<dbReference type="EMBL" id="AF002211">
    <property type="protein sequence ID" value="AAB60886.1"/>
    <property type="molecule type" value="mRNA"/>
</dbReference>
<dbReference type="EMBL" id="AF109714">
    <property type="protein sequence ID" value="AAD09190.1"/>
    <property type="molecule type" value="Genomic_DNA"/>
</dbReference>
<dbReference type="PIR" id="T06333">
    <property type="entry name" value="T06333"/>
</dbReference>
<dbReference type="SMR" id="O04437"/>
<dbReference type="STRING" id="4565.O04437"/>
<dbReference type="PaxDb" id="4565-Traes_5AL_72929F651.1"/>
<dbReference type="eggNOG" id="KOG0868">
    <property type="taxonomic scope" value="Eukaryota"/>
</dbReference>
<dbReference type="BRENDA" id="2.5.1.18">
    <property type="organism ID" value="6500"/>
</dbReference>
<dbReference type="Proteomes" id="UP000019116">
    <property type="component" value="Unplaced"/>
</dbReference>
<dbReference type="ExpressionAtlas" id="O04437">
    <property type="expression patterns" value="baseline and differential"/>
</dbReference>
<dbReference type="GO" id="GO:0005737">
    <property type="term" value="C:cytoplasm"/>
    <property type="evidence" value="ECO:0007669"/>
    <property type="project" value="UniProtKB-SubCell"/>
</dbReference>
<dbReference type="GO" id="GO:0004364">
    <property type="term" value="F:glutathione transferase activity"/>
    <property type="evidence" value="ECO:0000318"/>
    <property type="project" value="GO_Central"/>
</dbReference>
<dbReference type="GO" id="GO:0016034">
    <property type="term" value="F:maleylacetoacetate isomerase activity"/>
    <property type="evidence" value="ECO:0000318"/>
    <property type="project" value="GO_Central"/>
</dbReference>
<dbReference type="GO" id="GO:0006749">
    <property type="term" value="P:glutathione metabolic process"/>
    <property type="evidence" value="ECO:0000318"/>
    <property type="project" value="GO_Central"/>
</dbReference>
<dbReference type="GO" id="GO:0006559">
    <property type="term" value="P:L-phenylalanine catabolic process"/>
    <property type="evidence" value="ECO:0000318"/>
    <property type="project" value="GO_Central"/>
</dbReference>
<dbReference type="CDD" id="cd03191">
    <property type="entry name" value="GST_C_Zeta"/>
    <property type="match status" value="1"/>
</dbReference>
<dbReference type="CDD" id="cd03042">
    <property type="entry name" value="GST_N_Zeta"/>
    <property type="match status" value="1"/>
</dbReference>
<dbReference type="FunFam" id="3.40.30.10:FF:000100">
    <property type="entry name" value="Glutathione S-transferase Z1"/>
    <property type="match status" value="1"/>
</dbReference>
<dbReference type="FunFam" id="1.20.1050.10:FF:000017">
    <property type="entry name" value="Maleylacetoacetate isomerase"/>
    <property type="match status" value="1"/>
</dbReference>
<dbReference type="Gene3D" id="1.20.1050.10">
    <property type="match status" value="1"/>
</dbReference>
<dbReference type="Gene3D" id="3.40.30.10">
    <property type="entry name" value="Glutaredoxin"/>
    <property type="match status" value="1"/>
</dbReference>
<dbReference type="InterPro" id="IPR010987">
    <property type="entry name" value="Glutathione-S-Trfase_C-like"/>
</dbReference>
<dbReference type="InterPro" id="IPR036282">
    <property type="entry name" value="Glutathione-S-Trfase_C_sf"/>
</dbReference>
<dbReference type="InterPro" id="IPR040079">
    <property type="entry name" value="Glutathione_S-Trfase"/>
</dbReference>
<dbReference type="InterPro" id="IPR004045">
    <property type="entry name" value="Glutathione_S-Trfase_N"/>
</dbReference>
<dbReference type="InterPro" id="IPR005955">
    <property type="entry name" value="GST_Zeta"/>
</dbReference>
<dbReference type="InterPro" id="IPR034330">
    <property type="entry name" value="GST_Zeta_C"/>
</dbReference>
<dbReference type="InterPro" id="IPR034333">
    <property type="entry name" value="GST_Zeta_N"/>
</dbReference>
<dbReference type="InterPro" id="IPR036249">
    <property type="entry name" value="Thioredoxin-like_sf"/>
</dbReference>
<dbReference type="NCBIfam" id="TIGR01262">
    <property type="entry name" value="maiA"/>
    <property type="match status" value="1"/>
</dbReference>
<dbReference type="PANTHER" id="PTHR42673:SF5">
    <property type="entry name" value="GLUTATHIONE S-TRANSFERASE"/>
    <property type="match status" value="1"/>
</dbReference>
<dbReference type="PANTHER" id="PTHR42673">
    <property type="entry name" value="MALEYLACETOACETATE ISOMERASE"/>
    <property type="match status" value="1"/>
</dbReference>
<dbReference type="Pfam" id="PF13417">
    <property type="entry name" value="GST_N_3"/>
    <property type="match status" value="1"/>
</dbReference>
<dbReference type="SFLD" id="SFLDS00019">
    <property type="entry name" value="Glutathione_Transferase_(cytos"/>
    <property type="match status" value="1"/>
</dbReference>
<dbReference type="SFLD" id="SFLDG00358">
    <property type="entry name" value="Main_(cytGST)"/>
    <property type="match status" value="1"/>
</dbReference>
<dbReference type="SUPFAM" id="SSF47616">
    <property type="entry name" value="GST C-terminal domain-like"/>
    <property type="match status" value="1"/>
</dbReference>
<dbReference type="SUPFAM" id="SSF52833">
    <property type="entry name" value="Thioredoxin-like"/>
    <property type="match status" value="1"/>
</dbReference>
<dbReference type="PROSITE" id="PS50405">
    <property type="entry name" value="GST_CTER"/>
    <property type="match status" value="1"/>
</dbReference>
<dbReference type="PROSITE" id="PS50404">
    <property type="entry name" value="GST_NTER"/>
    <property type="match status" value="1"/>
</dbReference>
<organism>
    <name type="scientific">Triticum aestivum</name>
    <name type="common">Wheat</name>
    <dbReference type="NCBI Taxonomy" id="4565"/>
    <lineage>
        <taxon>Eukaryota</taxon>
        <taxon>Viridiplantae</taxon>
        <taxon>Streptophyta</taxon>
        <taxon>Embryophyta</taxon>
        <taxon>Tracheophyta</taxon>
        <taxon>Spermatophyta</taxon>
        <taxon>Magnoliopsida</taxon>
        <taxon>Liliopsida</taxon>
        <taxon>Poales</taxon>
        <taxon>Poaceae</taxon>
        <taxon>BOP clade</taxon>
        <taxon>Pooideae</taxon>
        <taxon>Triticodae</taxon>
        <taxon>Triticeae</taxon>
        <taxon>Triticinae</taxon>
        <taxon>Triticum</taxon>
    </lineage>
</organism>
<comment type="function">
    <text>Has a glutathione transferase activity with ethacrynic acid and nitrophenyl acetate. Has low glutathione peroxidase activity with cumene hydroperoxide.</text>
</comment>
<comment type="catalytic activity">
    <reaction>
        <text>RX + glutathione = an S-substituted glutathione + a halide anion + H(+)</text>
        <dbReference type="Rhea" id="RHEA:16437"/>
        <dbReference type="ChEBI" id="CHEBI:15378"/>
        <dbReference type="ChEBI" id="CHEBI:16042"/>
        <dbReference type="ChEBI" id="CHEBI:17792"/>
        <dbReference type="ChEBI" id="CHEBI:57925"/>
        <dbReference type="ChEBI" id="CHEBI:90779"/>
        <dbReference type="EC" id="2.5.1.18"/>
    </reaction>
</comment>
<comment type="subcellular location">
    <subcellularLocation>
        <location evidence="1">Cytoplasm</location>
    </subcellularLocation>
</comment>
<comment type="similarity">
    <text evidence="2">Belongs to the GST superfamily. Zeta family.</text>
</comment>
<keyword id="KW-0963">Cytoplasm</keyword>
<keyword id="KW-1185">Reference proteome</keyword>
<keyword id="KW-0808">Transferase</keyword>
<feature type="chain" id="PRO_0000186034" description="Glutathione S-transferase">
    <location>
        <begin position="1"/>
        <end position="213"/>
    </location>
</feature>
<feature type="domain" description="GST N-terminal">
    <location>
        <begin position="4"/>
        <end position="81"/>
    </location>
</feature>
<feature type="domain" description="GST C-terminal">
    <location>
        <begin position="86"/>
        <end position="211"/>
    </location>
</feature>
<proteinExistence type="evidence at protein level"/>
<protein>
    <recommendedName>
        <fullName>Glutathione S-transferase</fullName>
        <ecNumber>2.5.1.18</ecNumber>
    </recommendedName>
    <alternativeName>
        <fullName>GST class-zeta</fullName>
    </alternativeName>
</protein>
<accession>O04437</accession>
<evidence type="ECO:0000250" key="1"/>
<evidence type="ECO:0000305" key="2"/>